<proteinExistence type="inferred from homology"/>
<feature type="chain" id="PRO_0000063103" description="Putative pterin-4-alpha-carbinolamine dehydratase">
    <location>
        <begin position="1"/>
        <end position="110"/>
    </location>
</feature>
<name>PHS_VIBVU</name>
<organism>
    <name type="scientific">Vibrio vulnificus (strain CMCP6)</name>
    <dbReference type="NCBI Taxonomy" id="216895"/>
    <lineage>
        <taxon>Bacteria</taxon>
        <taxon>Pseudomonadati</taxon>
        <taxon>Pseudomonadota</taxon>
        <taxon>Gammaproteobacteria</taxon>
        <taxon>Vibrionales</taxon>
        <taxon>Vibrionaceae</taxon>
        <taxon>Vibrio</taxon>
    </lineage>
</organism>
<accession>Q8D6S1</accession>
<dbReference type="EC" id="4.2.1.96" evidence="1"/>
<dbReference type="EMBL" id="AE016796">
    <property type="protein sequence ID" value="AAO07408.1"/>
    <property type="molecule type" value="Genomic_DNA"/>
</dbReference>
<dbReference type="RefSeq" id="WP_011081408.1">
    <property type="nucleotide sequence ID" value="NC_004460.2"/>
</dbReference>
<dbReference type="SMR" id="Q8D6S1"/>
<dbReference type="KEGG" id="vvu:VV2_0454"/>
<dbReference type="HOGENOM" id="CLU_081974_2_2_6"/>
<dbReference type="Proteomes" id="UP000002275">
    <property type="component" value="Chromosome 2"/>
</dbReference>
<dbReference type="GO" id="GO:0008124">
    <property type="term" value="F:4-alpha-hydroxytetrahydrobiopterin dehydratase activity"/>
    <property type="evidence" value="ECO:0007669"/>
    <property type="project" value="UniProtKB-UniRule"/>
</dbReference>
<dbReference type="GO" id="GO:0006729">
    <property type="term" value="P:tetrahydrobiopterin biosynthetic process"/>
    <property type="evidence" value="ECO:0007669"/>
    <property type="project" value="InterPro"/>
</dbReference>
<dbReference type="CDD" id="cd00913">
    <property type="entry name" value="PCD_DCoH_subfamily_a"/>
    <property type="match status" value="1"/>
</dbReference>
<dbReference type="Gene3D" id="3.30.1360.20">
    <property type="entry name" value="Transcriptional coactivator/pterin dehydratase"/>
    <property type="match status" value="1"/>
</dbReference>
<dbReference type="HAMAP" id="MF_00434">
    <property type="entry name" value="Pterin_4_alpha"/>
    <property type="match status" value="1"/>
</dbReference>
<dbReference type="InterPro" id="IPR036428">
    <property type="entry name" value="PCD_sf"/>
</dbReference>
<dbReference type="InterPro" id="IPR050376">
    <property type="entry name" value="Pterin-4-alpha-carb_dehyd"/>
</dbReference>
<dbReference type="InterPro" id="IPR001533">
    <property type="entry name" value="Pterin_deHydtase"/>
</dbReference>
<dbReference type="NCBIfam" id="NF002016">
    <property type="entry name" value="PRK00823.1-1"/>
    <property type="match status" value="1"/>
</dbReference>
<dbReference type="PANTHER" id="PTHR42805">
    <property type="entry name" value="PTERIN-4-ALPHA-CARBINOLAMINE DEHYDRATASE-RELATED"/>
    <property type="match status" value="1"/>
</dbReference>
<dbReference type="PANTHER" id="PTHR42805:SF1">
    <property type="entry name" value="PTERIN-4-ALPHA-CARBINOLAMINE DEHYDRATASE-RELATED"/>
    <property type="match status" value="1"/>
</dbReference>
<dbReference type="Pfam" id="PF01329">
    <property type="entry name" value="Pterin_4a"/>
    <property type="match status" value="1"/>
</dbReference>
<dbReference type="SUPFAM" id="SSF55248">
    <property type="entry name" value="PCD-like"/>
    <property type="match status" value="1"/>
</dbReference>
<comment type="catalytic activity">
    <reaction evidence="1">
        <text>(4aS,6R)-4a-hydroxy-L-erythro-5,6,7,8-tetrahydrobiopterin = (6R)-L-erythro-6,7-dihydrobiopterin + H2O</text>
        <dbReference type="Rhea" id="RHEA:11920"/>
        <dbReference type="ChEBI" id="CHEBI:15377"/>
        <dbReference type="ChEBI" id="CHEBI:15642"/>
        <dbReference type="ChEBI" id="CHEBI:43120"/>
        <dbReference type="EC" id="4.2.1.96"/>
    </reaction>
</comment>
<comment type="similarity">
    <text evidence="1">Belongs to the pterin-4-alpha-carbinolamine dehydratase family.</text>
</comment>
<evidence type="ECO:0000255" key="1">
    <source>
        <dbReference type="HAMAP-Rule" id="MF_00434"/>
    </source>
</evidence>
<sequence length="110" mass="12915">MLDELKCEACSIDAIALTTQQQQELLLELEGWHLMEREGIPQLEKVYKFKNFMQAWQFSNQVAELAEQEFHHPSILLEWGKVTVTWWSHSIKGLHKNDFICAAKCDQIIR</sequence>
<gene>
    <name type="ordered locus">VV2_0454</name>
</gene>
<keyword id="KW-0456">Lyase</keyword>
<reference key="1">
    <citation type="submission" date="2002-12" db="EMBL/GenBank/DDBJ databases">
        <title>Complete genome sequence of Vibrio vulnificus CMCP6.</title>
        <authorList>
            <person name="Rhee J.H."/>
            <person name="Kim S.Y."/>
            <person name="Chung S.S."/>
            <person name="Kim J.J."/>
            <person name="Moon Y.H."/>
            <person name="Jeong H."/>
            <person name="Choy H.E."/>
        </authorList>
    </citation>
    <scope>NUCLEOTIDE SEQUENCE [LARGE SCALE GENOMIC DNA]</scope>
    <source>
        <strain>CMCP6</strain>
    </source>
</reference>
<protein>
    <recommendedName>
        <fullName evidence="1">Putative pterin-4-alpha-carbinolamine dehydratase</fullName>
        <shortName evidence="1">PHS</shortName>
        <ecNumber evidence="1">4.2.1.96</ecNumber>
    </recommendedName>
    <alternativeName>
        <fullName evidence="1">4-alpha-hydroxy-tetrahydropterin dehydratase</fullName>
    </alternativeName>
    <alternativeName>
        <fullName evidence="1">Pterin carbinolamine dehydratase</fullName>
        <shortName evidence="1">PCD</shortName>
    </alternativeName>
</protein>